<accession>Q7NZD4</accession>
<sequence>MQLSDFDYHLPEALIAQHPPAERGASRLLHVDGMTLSDLSFADLPSRLQAGDLLVFNDTRVIRARLFGEKASGGKVEALIERVLDDHTALAHVRASKSPKPGSRLIFAGRWEAEMVERHDSMFKLRFLAEENVYDILEASGKLPLPPYIERSAEHDDDERYQTVYAREQGAVAAPTAGLHFTDAMLATLQAQGIATAFVTLHVGAGTFQPVKVDNVAEHKMHSEIYDIPQATVDAIAAARARGGRVVAVGTTSVRALESAARHGELKAGRGETDIFITPGYRFRVVDRLLTNFHLPKSTLLMLVSAFAGYDEIFQAYRHAVEKEYRFFSYGDAMLLEKKV</sequence>
<gene>
    <name evidence="1" type="primary">queA</name>
    <name type="ordered locus">CV_0988</name>
</gene>
<organism>
    <name type="scientific">Chromobacterium violaceum (strain ATCC 12472 / DSM 30191 / JCM 1249 / CCUG 213 / NBRC 12614 / NCIMB 9131 / NCTC 9757 / MK)</name>
    <dbReference type="NCBI Taxonomy" id="243365"/>
    <lineage>
        <taxon>Bacteria</taxon>
        <taxon>Pseudomonadati</taxon>
        <taxon>Pseudomonadota</taxon>
        <taxon>Betaproteobacteria</taxon>
        <taxon>Neisseriales</taxon>
        <taxon>Chromobacteriaceae</taxon>
        <taxon>Chromobacterium</taxon>
    </lineage>
</organism>
<evidence type="ECO:0000255" key="1">
    <source>
        <dbReference type="HAMAP-Rule" id="MF_00113"/>
    </source>
</evidence>
<name>QUEA_CHRVO</name>
<reference key="1">
    <citation type="journal article" date="2003" name="Proc. Natl. Acad. Sci. U.S.A.">
        <title>The complete genome sequence of Chromobacterium violaceum reveals remarkable and exploitable bacterial adaptability.</title>
        <authorList>
            <person name="Vasconcelos A.T.R."/>
            <person name="de Almeida D.F."/>
            <person name="Hungria M."/>
            <person name="Guimaraes C.T."/>
            <person name="Antonio R.V."/>
            <person name="Almeida F.C."/>
            <person name="de Almeida L.G.P."/>
            <person name="de Almeida R."/>
            <person name="Alves-Gomes J.A."/>
            <person name="Andrade E.M."/>
            <person name="Araripe J."/>
            <person name="de Araujo M.F.F."/>
            <person name="Astolfi-Filho S."/>
            <person name="Azevedo V."/>
            <person name="Baptista A.J."/>
            <person name="Bataus L.A.M."/>
            <person name="Batista J.S."/>
            <person name="Belo A."/>
            <person name="van den Berg C."/>
            <person name="Bogo M."/>
            <person name="Bonatto S."/>
            <person name="Bordignon J."/>
            <person name="Brigido M.M."/>
            <person name="Brito C.A."/>
            <person name="Brocchi M."/>
            <person name="Burity H.A."/>
            <person name="Camargo A.A."/>
            <person name="Cardoso D.D.P."/>
            <person name="Carneiro N.P."/>
            <person name="Carraro D.M."/>
            <person name="Carvalho C.M.B."/>
            <person name="Cascardo J.C.M."/>
            <person name="Cavada B.S."/>
            <person name="Chueire L.M.O."/>
            <person name="Creczynski-Pasa T.B."/>
            <person name="Cunha-Junior N.C."/>
            <person name="Fagundes N."/>
            <person name="Falcao C.L."/>
            <person name="Fantinatti F."/>
            <person name="Farias I.P."/>
            <person name="Felipe M.S.S."/>
            <person name="Ferrari L.P."/>
            <person name="Ferro J.A."/>
            <person name="Ferro M.I.T."/>
            <person name="Franco G.R."/>
            <person name="Freitas N.S.A."/>
            <person name="Furlan L.R."/>
            <person name="Gazzinelli R.T."/>
            <person name="Gomes E.A."/>
            <person name="Goncalves P.R."/>
            <person name="Grangeiro T.B."/>
            <person name="Grattapaglia D."/>
            <person name="Grisard E.C."/>
            <person name="Hanna E.S."/>
            <person name="Jardim S.N."/>
            <person name="Laurino J."/>
            <person name="Leoi L.C.T."/>
            <person name="Lima L.F.A."/>
            <person name="Loureiro M.F."/>
            <person name="Lyra M.C.C.P."/>
            <person name="Madeira H.M.F."/>
            <person name="Manfio G.P."/>
            <person name="Maranhao A.Q."/>
            <person name="Martins W.S."/>
            <person name="di Mauro S.M.Z."/>
            <person name="de Medeiros S.R.B."/>
            <person name="Meissner R.V."/>
            <person name="Moreira M.A.M."/>
            <person name="Nascimento F.F."/>
            <person name="Nicolas M.F."/>
            <person name="Oliveira J.G."/>
            <person name="Oliveira S.C."/>
            <person name="Paixao R.F.C."/>
            <person name="Parente J.A."/>
            <person name="Pedrosa F.O."/>
            <person name="Pena S.D.J."/>
            <person name="Pereira J.O."/>
            <person name="Pereira M."/>
            <person name="Pinto L.S.R.C."/>
            <person name="Pinto L.S."/>
            <person name="Porto J.I.R."/>
            <person name="Potrich D.P."/>
            <person name="Ramalho-Neto C.E."/>
            <person name="Reis A.M.M."/>
            <person name="Rigo L.U."/>
            <person name="Rondinelli E."/>
            <person name="Santos E.B.P."/>
            <person name="Santos F.R."/>
            <person name="Schneider M.P.C."/>
            <person name="Seuanez H.N."/>
            <person name="Silva A.M.R."/>
            <person name="da Silva A.L.C."/>
            <person name="Silva D.W."/>
            <person name="Silva R."/>
            <person name="Simoes I.C."/>
            <person name="Simon D."/>
            <person name="Soares C.M.A."/>
            <person name="Soares R.B.A."/>
            <person name="Souza E.M."/>
            <person name="Souza K.R.L."/>
            <person name="Souza R.C."/>
            <person name="Steffens M.B.R."/>
            <person name="Steindel M."/>
            <person name="Teixeira S.R."/>
            <person name="Urmenyi T."/>
            <person name="Vettore A."/>
            <person name="Wassem R."/>
            <person name="Zaha A."/>
            <person name="Simpson A.J.G."/>
        </authorList>
    </citation>
    <scope>NUCLEOTIDE SEQUENCE [LARGE SCALE GENOMIC DNA]</scope>
    <source>
        <strain>ATCC 12472 / DSM 30191 / JCM 1249 / CCUG 213 / NBRC 12614 / NCIMB 9131 / NCTC 9757 / MK</strain>
    </source>
</reference>
<comment type="function">
    <text evidence="1">Transfers and isomerizes the ribose moiety from AdoMet to the 7-aminomethyl group of 7-deazaguanine (preQ1-tRNA) to give epoxyqueuosine (oQ-tRNA).</text>
</comment>
<comment type="catalytic activity">
    <reaction evidence="1">
        <text>7-aminomethyl-7-carbaguanosine(34) in tRNA + S-adenosyl-L-methionine = epoxyqueuosine(34) in tRNA + adenine + L-methionine + 2 H(+)</text>
        <dbReference type="Rhea" id="RHEA:32155"/>
        <dbReference type="Rhea" id="RHEA-COMP:10342"/>
        <dbReference type="Rhea" id="RHEA-COMP:18582"/>
        <dbReference type="ChEBI" id="CHEBI:15378"/>
        <dbReference type="ChEBI" id="CHEBI:16708"/>
        <dbReference type="ChEBI" id="CHEBI:57844"/>
        <dbReference type="ChEBI" id="CHEBI:59789"/>
        <dbReference type="ChEBI" id="CHEBI:82833"/>
        <dbReference type="ChEBI" id="CHEBI:194443"/>
        <dbReference type="EC" id="2.4.99.17"/>
    </reaction>
</comment>
<comment type="pathway">
    <text evidence="1">tRNA modification; tRNA-queuosine biosynthesis.</text>
</comment>
<comment type="subunit">
    <text evidence="1">Monomer.</text>
</comment>
<comment type="subcellular location">
    <subcellularLocation>
        <location evidence="1">Cytoplasm</location>
    </subcellularLocation>
</comment>
<comment type="similarity">
    <text evidence="1">Belongs to the QueA family.</text>
</comment>
<proteinExistence type="inferred from homology"/>
<feature type="chain" id="PRO_0000165394" description="S-adenosylmethionine:tRNA ribosyltransferase-isomerase">
    <location>
        <begin position="1"/>
        <end position="340"/>
    </location>
</feature>
<protein>
    <recommendedName>
        <fullName evidence="1">S-adenosylmethionine:tRNA ribosyltransferase-isomerase</fullName>
        <ecNumber evidence="1">2.4.99.17</ecNumber>
    </recommendedName>
    <alternativeName>
        <fullName evidence="1">Queuosine biosynthesis protein QueA</fullName>
    </alternativeName>
</protein>
<dbReference type="EC" id="2.4.99.17" evidence="1"/>
<dbReference type="EMBL" id="AE016825">
    <property type="protein sequence ID" value="AAQ58662.2"/>
    <property type="molecule type" value="Genomic_DNA"/>
</dbReference>
<dbReference type="RefSeq" id="WP_011134543.1">
    <property type="nucleotide sequence ID" value="NC_005085.1"/>
</dbReference>
<dbReference type="SMR" id="Q7NZD4"/>
<dbReference type="STRING" id="243365.CV_0988"/>
<dbReference type="GeneID" id="66366679"/>
<dbReference type="KEGG" id="cvi:CV_0988"/>
<dbReference type="eggNOG" id="COG0809">
    <property type="taxonomic scope" value="Bacteria"/>
</dbReference>
<dbReference type="HOGENOM" id="CLU_039110_1_0_4"/>
<dbReference type="OrthoDB" id="9805933at2"/>
<dbReference type="UniPathway" id="UPA00392"/>
<dbReference type="Proteomes" id="UP000001424">
    <property type="component" value="Chromosome"/>
</dbReference>
<dbReference type="GO" id="GO:0005737">
    <property type="term" value="C:cytoplasm"/>
    <property type="evidence" value="ECO:0007669"/>
    <property type="project" value="UniProtKB-SubCell"/>
</dbReference>
<dbReference type="GO" id="GO:0051075">
    <property type="term" value="F:S-adenosylmethionine:tRNA ribosyltransferase-isomerase activity"/>
    <property type="evidence" value="ECO:0007669"/>
    <property type="project" value="UniProtKB-EC"/>
</dbReference>
<dbReference type="GO" id="GO:0008616">
    <property type="term" value="P:queuosine biosynthetic process"/>
    <property type="evidence" value="ECO:0007669"/>
    <property type="project" value="UniProtKB-UniRule"/>
</dbReference>
<dbReference type="GO" id="GO:0002099">
    <property type="term" value="P:tRNA wobble guanine modification"/>
    <property type="evidence" value="ECO:0007669"/>
    <property type="project" value="TreeGrafter"/>
</dbReference>
<dbReference type="FunFam" id="3.40.1780.10:FF:000001">
    <property type="entry name" value="S-adenosylmethionine:tRNA ribosyltransferase-isomerase"/>
    <property type="match status" value="1"/>
</dbReference>
<dbReference type="Gene3D" id="2.40.10.240">
    <property type="entry name" value="QueA-like"/>
    <property type="match status" value="1"/>
</dbReference>
<dbReference type="Gene3D" id="3.40.1780.10">
    <property type="entry name" value="QueA-like"/>
    <property type="match status" value="1"/>
</dbReference>
<dbReference type="HAMAP" id="MF_00113">
    <property type="entry name" value="QueA"/>
    <property type="match status" value="1"/>
</dbReference>
<dbReference type="InterPro" id="IPR003699">
    <property type="entry name" value="QueA"/>
</dbReference>
<dbReference type="InterPro" id="IPR042118">
    <property type="entry name" value="QueA_dom1"/>
</dbReference>
<dbReference type="InterPro" id="IPR042119">
    <property type="entry name" value="QueA_dom2"/>
</dbReference>
<dbReference type="InterPro" id="IPR036100">
    <property type="entry name" value="QueA_sf"/>
</dbReference>
<dbReference type="NCBIfam" id="NF001140">
    <property type="entry name" value="PRK00147.1"/>
    <property type="match status" value="1"/>
</dbReference>
<dbReference type="NCBIfam" id="TIGR00113">
    <property type="entry name" value="queA"/>
    <property type="match status" value="1"/>
</dbReference>
<dbReference type="PANTHER" id="PTHR30307">
    <property type="entry name" value="S-ADENOSYLMETHIONINE:TRNA RIBOSYLTRANSFERASE-ISOMERASE"/>
    <property type="match status" value="1"/>
</dbReference>
<dbReference type="PANTHER" id="PTHR30307:SF0">
    <property type="entry name" value="S-ADENOSYLMETHIONINE:TRNA RIBOSYLTRANSFERASE-ISOMERASE"/>
    <property type="match status" value="1"/>
</dbReference>
<dbReference type="Pfam" id="PF02547">
    <property type="entry name" value="Queuosine_synth"/>
    <property type="match status" value="1"/>
</dbReference>
<dbReference type="SUPFAM" id="SSF111337">
    <property type="entry name" value="QueA-like"/>
    <property type="match status" value="1"/>
</dbReference>
<keyword id="KW-0963">Cytoplasm</keyword>
<keyword id="KW-0671">Queuosine biosynthesis</keyword>
<keyword id="KW-1185">Reference proteome</keyword>
<keyword id="KW-0949">S-adenosyl-L-methionine</keyword>
<keyword id="KW-0808">Transferase</keyword>